<feature type="initiator methionine" description="Removed" evidence="2">
    <location>
        <position position="1"/>
    </location>
</feature>
<feature type="chain" id="PRO_0000405037" description="Lissencephaly-1 homolog">
    <location>
        <begin position="2"/>
        <end position="410"/>
    </location>
</feature>
<feature type="domain" description="LisH" evidence="2">
    <location>
        <begin position="7"/>
        <end position="39"/>
    </location>
</feature>
<feature type="repeat" description="WD 1">
    <location>
        <begin position="106"/>
        <end position="147"/>
    </location>
</feature>
<feature type="repeat" description="WD 2">
    <location>
        <begin position="148"/>
        <end position="189"/>
    </location>
</feature>
<feature type="repeat" description="WD 3">
    <location>
        <begin position="190"/>
        <end position="229"/>
    </location>
</feature>
<feature type="repeat" description="WD 4">
    <location>
        <begin position="232"/>
        <end position="271"/>
    </location>
</feature>
<feature type="repeat" description="WD 5">
    <location>
        <begin position="274"/>
        <end position="333"/>
    </location>
</feature>
<feature type="repeat" description="WD 6">
    <location>
        <begin position="336"/>
        <end position="375"/>
    </location>
</feature>
<feature type="repeat" description="WD 7">
    <location>
        <begin position="378"/>
        <end position="410"/>
    </location>
</feature>
<feature type="coiled-coil region" evidence="2">
    <location>
        <begin position="32"/>
        <end position="82"/>
    </location>
</feature>
<evidence type="ECO:0000250" key="1">
    <source>
        <dbReference type="UniProtKB" id="P43033"/>
    </source>
</evidence>
<evidence type="ECO:0000255" key="2">
    <source>
        <dbReference type="HAMAP-Rule" id="MF_03141"/>
    </source>
</evidence>
<comment type="function">
    <text evidence="1 2">Regulatory subunit (beta subunit) of the cytosolic type I platelet-activating factor (PAF) acetylhydrolase (PAF-AH (I)), an enzyme that catalyzes the hydrolyze of the acetyl group at the sn-2 position of PAF and its analogs and participates in the PAF inactivation (By similarity). Positively regulates the activity of the minus-end directed microtubule motor protein dynein. May enhance dynein-mediated microtubule sliding by targeting dynein to the microtubule plus end. Required for several dynein- and microtubule-dependent processes such as the maintenance of Golgi integrity, the peripheral transport of microtubule fragments and the coupling of the nucleus and centrosome. May be required for proliferation of neuronal precursors and neuronal migration.</text>
</comment>
<comment type="subunit">
    <text evidence="1 2">Can self-associate. Component of the cytosolic PAF-AH (I) heterotetrameric enzyme, which is composed of PAFAH1B1 (beta), PAFAH1B2 (alpha2) and PAFAH1B3 (alpha1) subunits. The catalytic activity of the enzyme resides in the alpha1 (PAFAH1B3) and alpha2 (PAFAH1B2) subunits, whereas the beta subunit (PAFAH1B1) has regulatory activity. Trimer formation is not essential for the catalytic activity (By similarity). Interacts with dynein, dynactin, nde1 and ndel1.</text>
</comment>
<comment type="subcellular location">
    <subcellularLocation>
        <location evidence="2">Cytoplasm</location>
        <location evidence="2">Cytoskeleton</location>
    </subcellularLocation>
    <subcellularLocation>
        <location evidence="2">Cytoplasm</location>
        <location evidence="2">Cytoskeleton</location>
        <location evidence="2">Microtubule organizing center</location>
        <location evidence="2">Centrosome</location>
    </subcellularLocation>
    <text evidence="2">Localizes to the plus end of microtubules and to the centrosome.</text>
</comment>
<comment type="domain">
    <text evidence="2">Dimerization mediated by the LisH domain may be required to activate dynein.</text>
</comment>
<comment type="similarity">
    <text evidence="2">Belongs to the WD repeat LIS1/nudF family.</text>
</comment>
<dbReference type="EMBL" id="CAAE01015036">
    <property type="protein sequence ID" value="CAG11397.1"/>
    <property type="molecule type" value="Genomic_DNA"/>
</dbReference>
<dbReference type="SMR" id="Q4RJN5"/>
<dbReference type="FunCoup" id="Q4RJN5">
    <property type="interactions" value="1668"/>
</dbReference>
<dbReference type="STRING" id="99883.ENSTNIP00000021128"/>
<dbReference type="Ensembl" id="ENSTNIT00000021361.1">
    <property type="protein sequence ID" value="ENSTNIP00000021128.1"/>
    <property type="gene ID" value="ENSTNIG00000017966.1"/>
</dbReference>
<dbReference type="KEGG" id="tng:GSTEN00033355G001"/>
<dbReference type="GeneTree" id="ENSGT00940000155039"/>
<dbReference type="HOGENOM" id="CLU_000288_57_15_1"/>
<dbReference type="InParanoid" id="Q4RJN5"/>
<dbReference type="OMA" id="WHVATKE"/>
<dbReference type="OrthoDB" id="674604at2759"/>
<dbReference type="TreeFam" id="TF105741"/>
<dbReference type="Proteomes" id="UP000007303">
    <property type="component" value="Unassembled WGS sequence"/>
</dbReference>
<dbReference type="GO" id="GO:0008247">
    <property type="term" value="C:1-alkyl-2-acetylglycerophosphocholine esterase complex"/>
    <property type="evidence" value="ECO:0000250"/>
    <property type="project" value="UniProtKB"/>
</dbReference>
<dbReference type="GO" id="GO:0005813">
    <property type="term" value="C:centrosome"/>
    <property type="evidence" value="ECO:0007669"/>
    <property type="project" value="UniProtKB-SubCell"/>
</dbReference>
<dbReference type="GO" id="GO:0005737">
    <property type="term" value="C:cytoplasm"/>
    <property type="evidence" value="ECO:0007669"/>
    <property type="project" value="UniProtKB-UniRule"/>
</dbReference>
<dbReference type="GO" id="GO:0005874">
    <property type="term" value="C:microtubule"/>
    <property type="evidence" value="ECO:0007669"/>
    <property type="project" value="UniProtKB-KW"/>
</dbReference>
<dbReference type="GO" id="GO:0005875">
    <property type="term" value="C:microtubule associated complex"/>
    <property type="evidence" value="ECO:0007669"/>
    <property type="project" value="UniProtKB-UniRule"/>
</dbReference>
<dbReference type="GO" id="GO:0070840">
    <property type="term" value="F:dynein complex binding"/>
    <property type="evidence" value="ECO:0007669"/>
    <property type="project" value="UniProtKB-UniRule"/>
</dbReference>
<dbReference type="GO" id="GO:0046982">
    <property type="term" value="F:protein heterodimerization activity"/>
    <property type="evidence" value="ECO:0000250"/>
    <property type="project" value="UniProtKB"/>
</dbReference>
<dbReference type="GO" id="GO:0030154">
    <property type="term" value="P:cell differentiation"/>
    <property type="evidence" value="ECO:0007669"/>
    <property type="project" value="UniProtKB-KW"/>
</dbReference>
<dbReference type="GO" id="GO:0051301">
    <property type="term" value="P:cell division"/>
    <property type="evidence" value="ECO:0007669"/>
    <property type="project" value="UniProtKB-KW"/>
</dbReference>
<dbReference type="GO" id="GO:0000132">
    <property type="term" value="P:establishment of mitotic spindle orientation"/>
    <property type="evidence" value="ECO:0007669"/>
    <property type="project" value="UniProtKB-UniRule"/>
</dbReference>
<dbReference type="GO" id="GO:0051012">
    <property type="term" value="P:microtubule sliding"/>
    <property type="evidence" value="ECO:0007669"/>
    <property type="project" value="UniProtKB-UniRule"/>
</dbReference>
<dbReference type="GO" id="GO:0007399">
    <property type="term" value="P:nervous system development"/>
    <property type="evidence" value="ECO:0007669"/>
    <property type="project" value="UniProtKB-UniRule"/>
</dbReference>
<dbReference type="GO" id="GO:0038026">
    <property type="term" value="P:reelin-mediated signaling pathway"/>
    <property type="evidence" value="ECO:0000250"/>
    <property type="project" value="UniProtKB"/>
</dbReference>
<dbReference type="CDD" id="cd00200">
    <property type="entry name" value="WD40"/>
    <property type="match status" value="1"/>
</dbReference>
<dbReference type="FunFam" id="2.130.10.10:FF:000038">
    <property type="entry name" value="Lissencephaly-1 homolog B"/>
    <property type="match status" value="1"/>
</dbReference>
<dbReference type="FunFam" id="1.20.960.30:FF:000002">
    <property type="entry name" value="Platelet-activating factor acetylhydrolase ib"/>
    <property type="match status" value="1"/>
</dbReference>
<dbReference type="Gene3D" id="1.20.960.30">
    <property type="match status" value="1"/>
</dbReference>
<dbReference type="Gene3D" id="2.130.10.10">
    <property type="entry name" value="YVTN repeat-like/Quinoprotein amine dehydrogenase"/>
    <property type="match status" value="1"/>
</dbReference>
<dbReference type="HAMAP" id="MF_03141">
    <property type="entry name" value="lis1"/>
    <property type="match status" value="1"/>
</dbReference>
<dbReference type="InterPro" id="IPR017252">
    <property type="entry name" value="Dynein_regulator_LIS1"/>
</dbReference>
<dbReference type="InterPro" id="IPR020472">
    <property type="entry name" value="G-protein_beta_WD-40_rep"/>
</dbReference>
<dbReference type="InterPro" id="IPR037190">
    <property type="entry name" value="LIS1_N"/>
</dbReference>
<dbReference type="InterPro" id="IPR006594">
    <property type="entry name" value="LisH"/>
</dbReference>
<dbReference type="InterPro" id="IPR056795">
    <property type="entry name" value="PAC1-like_LisH-like_dom"/>
</dbReference>
<dbReference type="InterPro" id="IPR015943">
    <property type="entry name" value="WD40/YVTN_repeat-like_dom_sf"/>
</dbReference>
<dbReference type="InterPro" id="IPR019775">
    <property type="entry name" value="WD40_repeat_CS"/>
</dbReference>
<dbReference type="InterPro" id="IPR036322">
    <property type="entry name" value="WD40_repeat_dom_sf"/>
</dbReference>
<dbReference type="InterPro" id="IPR001680">
    <property type="entry name" value="WD40_rpt"/>
</dbReference>
<dbReference type="InterPro" id="IPR050349">
    <property type="entry name" value="WD_LIS1/nudF_dynein_reg"/>
</dbReference>
<dbReference type="PANTHER" id="PTHR44129">
    <property type="entry name" value="WD REPEAT-CONTAINING PROTEIN POP1"/>
    <property type="match status" value="1"/>
</dbReference>
<dbReference type="Pfam" id="PF24951">
    <property type="entry name" value="LisH_PAC1"/>
    <property type="match status" value="1"/>
</dbReference>
<dbReference type="Pfam" id="PF00400">
    <property type="entry name" value="WD40"/>
    <property type="match status" value="7"/>
</dbReference>
<dbReference type="PIRSF" id="PIRSF037647">
    <property type="entry name" value="Dynein_regulator_Lis1"/>
    <property type="match status" value="1"/>
</dbReference>
<dbReference type="PRINTS" id="PR00320">
    <property type="entry name" value="GPROTEINBRPT"/>
</dbReference>
<dbReference type="SMART" id="SM00667">
    <property type="entry name" value="LisH"/>
    <property type="match status" value="1"/>
</dbReference>
<dbReference type="SMART" id="SM00320">
    <property type="entry name" value="WD40"/>
    <property type="match status" value="7"/>
</dbReference>
<dbReference type="SUPFAM" id="SSF109925">
    <property type="entry name" value="Lissencephaly-1 protein (Lis-1, PAF-AH alpha) N-terminal domain"/>
    <property type="match status" value="1"/>
</dbReference>
<dbReference type="SUPFAM" id="SSF50978">
    <property type="entry name" value="WD40 repeat-like"/>
    <property type="match status" value="1"/>
</dbReference>
<dbReference type="PROSITE" id="PS50896">
    <property type="entry name" value="LISH"/>
    <property type="match status" value="1"/>
</dbReference>
<dbReference type="PROSITE" id="PS00678">
    <property type="entry name" value="WD_REPEATS_1"/>
    <property type="match status" value="4"/>
</dbReference>
<dbReference type="PROSITE" id="PS50082">
    <property type="entry name" value="WD_REPEATS_2"/>
    <property type="match status" value="7"/>
</dbReference>
<dbReference type="PROSITE" id="PS50294">
    <property type="entry name" value="WD_REPEATS_REGION"/>
    <property type="match status" value="1"/>
</dbReference>
<sequence>MVLSQRQRDELNRAIADYLRSNGYEEAYSTFKKEAELDNNEELDKKYAGLLEKKWTSVIRLQKKVMELESKLNEAKEEITLGGPVSQKRDPKEWIPRPPERYALSGHRSPVTRVIFHPVFSVMVSASEDATIKVWDYETGDFERTLKGHTDSVQDISFDLTGKLLASCSADMTIKLWDFQSFECIRTMHGHDHNVSSVAIMPNGDHIISASRDKTMKMWEVATGYCVKTFTGHREWVRMVRPNQDGTLIASCSNDQTVRVWVVASKECKAELREHEHVVECISWAPESAHPTILDATSSESKKSGKPGPFLLSGSRDKTIKMWDVSTGMCLMTLVGHDNWVRGVLFHPGGKFIVTCADDKTLRIWDYKNKRCMKTLCAHEHFVTSLDFHKAAPYVVTGSVDQTVKVWECR</sequence>
<organism>
    <name type="scientific">Tetraodon nigroviridis</name>
    <name type="common">Spotted green pufferfish</name>
    <name type="synonym">Chelonodon nigroviridis</name>
    <dbReference type="NCBI Taxonomy" id="99883"/>
    <lineage>
        <taxon>Eukaryota</taxon>
        <taxon>Metazoa</taxon>
        <taxon>Chordata</taxon>
        <taxon>Craniata</taxon>
        <taxon>Vertebrata</taxon>
        <taxon>Euteleostomi</taxon>
        <taxon>Actinopterygii</taxon>
        <taxon>Neopterygii</taxon>
        <taxon>Teleostei</taxon>
        <taxon>Neoteleostei</taxon>
        <taxon>Acanthomorphata</taxon>
        <taxon>Eupercaria</taxon>
        <taxon>Tetraodontiformes</taxon>
        <taxon>Tetradontoidea</taxon>
        <taxon>Tetraodontidae</taxon>
        <taxon>Tetraodon</taxon>
    </lineage>
</organism>
<keyword id="KW-0131">Cell cycle</keyword>
<keyword id="KW-0132">Cell division</keyword>
<keyword id="KW-0175">Coiled coil</keyword>
<keyword id="KW-0963">Cytoplasm</keyword>
<keyword id="KW-0206">Cytoskeleton</keyword>
<keyword id="KW-0217">Developmental protein</keyword>
<keyword id="KW-0221">Differentiation</keyword>
<keyword id="KW-0493">Microtubule</keyword>
<keyword id="KW-0498">Mitosis</keyword>
<keyword id="KW-0524">Neurogenesis</keyword>
<keyword id="KW-1185">Reference proteome</keyword>
<keyword id="KW-0677">Repeat</keyword>
<keyword id="KW-0813">Transport</keyword>
<keyword id="KW-0853">WD repeat</keyword>
<accession>Q4RJN5</accession>
<protein>
    <recommendedName>
        <fullName evidence="2">Lissencephaly-1 homolog</fullName>
    </recommendedName>
</protein>
<proteinExistence type="inferred from homology"/>
<name>LIS1_TETNG</name>
<gene>
    <name type="primary">pafah1b1</name>
    <name evidence="2" type="synonym">lis1</name>
    <name type="ORF">GSTENG00033355001</name>
</gene>
<reference key="1">
    <citation type="journal article" date="2004" name="Nature">
        <title>Genome duplication in the teleost fish Tetraodon nigroviridis reveals the early vertebrate proto-karyotype.</title>
        <authorList>
            <person name="Jaillon O."/>
            <person name="Aury J.-M."/>
            <person name="Brunet F."/>
            <person name="Petit J.-L."/>
            <person name="Stange-Thomann N."/>
            <person name="Mauceli E."/>
            <person name="Bouneau L."/>
            <person name="Fischer C."/>
            <person name="Ozouf-Costaz C."/>
            <person name="Bernot A."/>
            <person name="Nicaud S."/>
            <person name="Jaffe D."/>
            <person name="Fisher S."/>
            <person name="Lutfalla G."/>
            <person name="Dossat C."/>
            <person name="Segurens B."/>
            <person name="Dasilva C."/>
            <person name="Salanoubat M."/>
            <person name="Levy M."/>
            <person name="Boudet N."/>
            <person name="Castellano S."/>
            <person name="Anthouard V."/>
            <person name="Jubin C."/>
            <person name="Castelli V."/>
            <person name="Katinka M."/>
            <person name="Vacherie B."/>
            <person name="Biemont C."/>
            <person name="Skalli Z."/>
            <person name="Cattolico L."/>
            <person name="Poulain J."/>
            <person name="De Berardinis V."/>
            <person name="Cruaud C."/>
            <person name="Duprat S."/>
            <person name="Brottier P."/>
            <person name="Coutanceau J.-P."/>
            <person name="Gouzy J."/>
            <person name="Parra G."/>
            <person name="Lardier G."/>
            <person name="Chapple C."/>
            <person name="McKernan K.J."/>
            <person name="McEwan P."/>
            <person name="Bosak S."/>
            <person name="Kellis M."/>
            <person name="Volff J.-N."/>
            <person name="Guigo R."/>
            <person name="Zody M.C."/>
            <person name="Mesirov J."/>
            <person name="Lindblad-Toh K."/>
            <person name="Birren B."/>
            <person name="Nusbaum C."/>
            <person name="Kahn D."/>
            <person name="Robinson-Rechavi M."/>
            <person name="Laudet V."/>
            <person name="Schachter V."/>
            <person name="Quetier F."/>
            <person name="Saurin W."/>
            <person name="Scarpelli C."/>
            <person name="Wincker P."/>
            <person name="Lander E.S."/>
            <person name="Weissenbach J."/>
            <person name="Roest Crollius H."/>
        </authorList>
    </citation>
    <scope>NUCLEOTIDE SEQUENCE [LARGE SCALE GENOMIC DNA]</scope>
</reference>